<gene>
    <name type="primary">LHB</name>
</gene>
<comment type="function">
    <text evidence="1">Promotes spermatogenesis and ovulation by stimulating the testes and ovaries to synthesize steroids.</text>
</comment>
<comment type="subunit">
    <text evidence="1">Heterodimer of a common alpha chain and a unique beta chain which confers biological specificity to thyrotropin, lutropin, follitropin and gonadotropin.</text>
</comment>
<comment type="subcellular location">
    <subcellularLocation>
        <location>Secreted</location>
    </subcellularLocation>
</comment>
<comment type="similarity">
    <text evidence="3">Belongs to the glycoprotein hormones subunit beta family.</text>
</comment>
<evidence type="ECO:0000250" key="1"/>
<evidence type="ECO:0000255" key="2"/>
<evidence type="ECO:0000305" key="3"/>
<organism>
    <name type="scientific">Ailurus fulgens</name>
    <name type="common">Himalayan red panda</name>
    <dbReference type="NCBI Taxonomy" id="9649"/>
    <lineage>
        <taxon>Eukaryota</taxon>
        <taxon>Metazoa</taxon>
        <taxon>Chordata</taxon>
        <taxon>Craniata</taxon>
        <taxon>Vertebrata</taxon>
        <taxon>Euteleostomi</taxon>
        <taxon>Mammalia</taxon>
        <taxon>Eutheria</taxon>
        <taxon>Laurasiatheria</taxon>
        <taxon>Carnivora</taxon>
        <taxon>Caniformia</taxon>
        <taxon>Musteloidea</taxon>
        <taxon>Ailuridae</taxon>
        <taxon>Ailurus</taxon>
    </lineage>
</organism>
<reference key="1">
    <citation type="submission" date="2002-02" db="EMBL/GenBank/DDBJ databases">
        <title>The lesser panda luteinizing hormone beta subunit.</title>
        <authorList>
            <person name="Liao M.J."/>
            <person name="Zhu M.Y."/>
            <person name="Zhang A.J."/>
        </authorList>
    </citation>
    <scope>NUCLEOTIDE SEQUENCE [MRNA]</scope>
    <source>
        <tissue>Pituitary</tissue>
    </source>
</reference>
<proteinExistence type="evidence at transcript level"/>
<keyword id="KW-1015">Disulfide bond</keyword>
<keyword id="KW-0325">Glycoprotein</keyword>
<keyword id="KW-0372">Hormone</keyword>
<keyword id="KW-0964">Secreted</keyword>
<keyword id="KW-0732">Signal</keyword>
<feature type="signal peptide" evidence="1">
    <location>
        <begin position="1"/>
        <end position="20"/>
    </location>
</feature>
<feature type="chain" id="PRO_0000042864" description="Lutropin subunit beta">
    <location>
        <begin position="21"/>
        <end position="141"/>
    </location>
</feature>
<feature type="glycosylation site" description="N-linked (GlcNAc...) asparagine" evidence="2">
    <location>
        <position position="33"/>
    </location>
</feature>
<feature type="disulfide bond" evidence="1">
    <location>
        <begin position="29"/>
        <end position="77"/>
    </location>
</feature>
<feature type="disulfide bond" evidence="1">
    <location>
        <begin position="43"/>
        <end position="92"/>
    </location>
</feature>
<feature type="disulfide bond" evidence="1">
    <location>
        <begin position="46"/>
        <end position="130"/>
    </location>
</feature>
<feature type="disulfide bond" evidence="1">
    <location>
        <begin position="54"/>
        <end position="108"/>
    </location>
</feature>
<feature type="disulfide bond" evidence="1">
    <location>
        <begin position="58"/>
        <end position="110"/>
    </location>
</feature>
<feature type="disulfide bond" evidence="1">
    <location>
        <begin position="113"/>
        <end position="120"/>
    </location>
</feature>
<dbReference type="EMBL" id="AF488738">
    <property type="protein sequence ID" value="AAN32898.1"/>
    <property type="molecule type" value="mRNA"/>
</dbReference>
<dbReference type="SMR" id="Q8HZR9"/>
<dbReference type="GlyCosmos" id="Q8HZR9">
    <property type="glycosylation" value="1 site, No reported glycans"/>
</dbReference>
<dbReference type="GO" id="GO:0005737">
    <property type="term" value="C:cytoplasm"/>
    <property type="evidence" value="ECO:0007669"/>
    <property type="project" value="TreeGrafter"/>
</dbReference>
<dbReference type="GO" id="GO:0005615">
    <property type="term" value="C:extracellular space"/>
    <property type="evidence" value="ECO:0007669"/>
    <property type="project" value="TreeGrafter"/>
</dbReference>
<dbReference type="GO" id="GO:0005179">
    <property type="term" value="F:hormone activity"/>
    <property type="evidence" value="ECO:0007669"/>
    <property type="project" value="UniProtKB-KW"/>
</dbReference>
<dbReference type="GO" id="GO:0007186">
    <property type="term" value="P:G protein-coupled receptor signaling pathway"/>
    <property type="evidence" value="ECO:0007669"/>
    <property type="project" value="TreeGrafter"/>
</dbReference>
<dbReference type="CDD" id="cd00069">
    <property type="entry name" value="GHB_like"/>
    <property type="match status" value="1"/>
</dbReference>
<dbReference type="FunFam" id="2.10.90.10:FF:000007">
    <property type="entry name" value="Luteinizing hormone beta subunit"/>
    <property type="match status" value="1"/>
</dbReference>
<dbReference type="Gene3D" id="2.10.90.10">
    <property type="entry name" value="Cystine-knot cytokines"/>
    <property type="match status" value="1"/>
</dbReference>
<dbReference type="InterPro" id="IPR029034">
    <property type="entry name" value="Cystine-knot_cytokine"/>
</dbReference>
<dbReference type="InterPro" id="IPR006208">
    <property type="entry name" value="Glyco_hormone_CN"/>
</dbReference>
<dbReference type="InterPro" id="IPR001545">
    <property type="entry name" value="Gonadotropin_bsu"/>
</dbReference>
<dbReference type="InterPro" id="IPR018245">
    <property type="entry name" value="Gonadotropin_bsu_CS"/>
</dbReference>
<dbReference type="PANTHER" id="PTHR11515">
    <property type="entry name" value="GLYCOPROTEIN HORMONE BETA CHAIN"/>
    <property type="match status" value="1"/>
</dbReference>
<dbReference type="PANTHER" id="PTHR11515:SF11">
    <property type="entry name" value="LUTROPIN SUBUNIT BETA"/>
    <property type="match status" value="1"/>
</dbReference>
<dbReference type="Pfam" id="PF00007">
    <property type="entry name" value="Cys_knot"/>
    <property type="match status" value="1"/>
</dbReference>
<dbReference type="SMART" id="SM00068">
    <property type="entry name" value="GHB"/>
    <property type="match status" value="1"/>
</dbReference>
<dbReference type="SUPFAM" id="SSF57501">
    <property type="entry name" value="Cystine-knot cytokines"/>
    <property type="match status" value="1"/>
</dbReference>
<dbReference type="PROSITE" id="PS00261">
    <property type="entry name" value="GLYCO_HORMONE_BETA_1"/>
    <property type="match status" value="1"/>
</dbReference>
<dbReference type="PROSITE" id="PS00689">
    <property type="entry name" value="GLYCO_HORMONE_BETA_2"/>
    <property type="match status" value="1"/>
</dbReference>
<accession>Q8HZR9</accession>
<protein>
    <recommendedName>
        <fullName>Lutropin subunit beta</fullName>
    </recommendedName>
    <alternativeName>
        <fullName>Luteinizing hormone subunit beta</fullName>
        <shortName>LH-B</shortName>
        <shortName>LSH-B</shortName>
        <shortName>LSH-beta</shortName>
    </alternativeName>
    <alternativeName>
        <fullName>Lutropin beta chain</fullName>
    </alternativeName>
</protein>
<name>LSHB_AILFU</name>
<sequence>MEMLQGLLLWLLLNVGGVWASRGPLRPLCRPINATLAAENEACPVCVTFTTTICAGYCPSMVRVLPAILPPMPQPVCTYHELHFASIRLPGCPPGVDPMVSFPVALSCRCGPCRLSNSDCGGPRAQPLACDRPPLPGLLFL</sequence>